<protein>
    <recommendedName>
        <fullName evidence="1">Biotin synthase</fullName>
        <ecNumber evidence="1">2.8.1.6</ecNumber>
    </recommendedName>
</protein>
<evidence type="ECO:0000255" key="1">
    <source>
        <dbReference type="HAMAP-Rule" id="MF_01694"/>
    </source>
</evidence>
<evidence type="ECO:0000255" key="2">
    <source>
        <dbReference type="PROSITE-ProRule" id="PRU01266"/>
    </source>
</evidence>
<feature type="chain" id="PRO_0000381622" description="Biotin synthase">
    <location>
        <begin position="1"/>
        <end position="350"/>
    </location>
</feature>
<feature type="domain" description="Radical SAM core" evidence="2">
    <location>
        <begin position="41"/>
        <end position="268"/>
    </location>
</feature>
<feature type="binding site" evidence="1">
    <location>
        <position position="56"/>
    </location>
    <ligand>
        <name>[4Fe-4S] cluster</name>
        <dbReference type="ChEBI" id="CHEBI:49883"/>
        <note>4Fe-4S-S-AdoMet</note>
    </ligand>
</feature>
<feature type="binding site" evidence="1">
    <location>
        <position position="60"/>
    </location>
    <ligand>
        <name>[4Fe-4S] cluster</name>
        <dbReference type="ChEBI" id="CHEBI:49883"/>
        <note>4Fe-4S-S-AdoMet</note>
    </ligand>
</feature>
<feature type="binding site" evidence="1">
    <location>
        <position position="63"/>
    </location>
    <ligand>
        <name>[4Fe-4S] cluster</name>
        <dbReference type="ChEBI" id="CHEBI:49883"/>
        <note>4Fe-4S-S-AdoMet</note>
    </ligand>
</feature>
<feature type="binding site" evidence="1">
    <location>
        <position position="100"/>
    </location>
    <ligand>
        <name>[2Fe-2S] cluster</name>
        <dbReference type="ChEBI" id="CHEBI:190135"/>
    </ligand>
</feature>
<feature type="binding site" evidence="1">
    <location>
        <position position="131"/>
    </location>
    <ligand>
        <name>[2Fe-2S] cluster</name>
        <dbReference type="ChEBI" id="CHEBI:190135"/>
    </ligand>
</feature>
<feature type="binding site" evidence="1">
    <location>
        <position position="191"/>
    </location>
    <ligand>
        <name>[2Fe-2S] cluster</name>
        <dbReference type="ChEBI" id="CHEBI:190135"/>
    </ligand>
</feature>
<feature type="binding site" evidence="1">
    <location>
        <position position="263"/>
    </location>
    <ligand>
        <name>[2Fe-2S] cluster</name>
        <dbReference type="ChEBI" id="CHEBI:190135"/>
    </ligand>
</feature>
<proteinExistence type="inferred from homology"/>
<keyword id="KW-0001">2Fe-2S</keyword>
<keyword id="KW-0004">4Fe-4S</keyword>
<keyword id="KW-0093">Biotin biosynthesis</keyword>
<keyword id="KW-0408">Iron</keyword>
<keyword id="KW-0411">Iron-sulfur</keyword>
<keyword id="KW-0479">Metal-binding</keyword>
<keyword id="KW-1185">Reference proteome</keyword>
<keyword id="KW-0949">S-adenosyl-L-methionine</keyword>
<keyword id="KW-0808">Transferase</keyword>
<organism>
    <name type="scientific">Shewanella pealeana (strain ATCC 700345 / ANG-SQ1)</name>
    <dbReference type="NCBI Taxonomy" id="398579"/>
    <lineage>
        <taxon>Bacteria</taxon>
        <taxon>Pseudomonadati</taxon>
        <taxon>Pseudomonadota</taxon>
        <taxon>Gammaproteobacteria</taxon>
        <taxon>Alteromonadales</taxon>
        <taxon>Shewanellaceae</taxon>
        <taxon>Shewanella</taxon>
    </lineage>
</organism>
<dbReference type="EC" id="2.8.1.6" evidence="1"/>
<dbReference type="EMBL" id="CP000851">
    <property type="protein sequence ID" value="ABV87124.1"/>
    <property type="molecule type" value="Genomic_DNA"/>
</dbReference>
<dbReference type="RefSeq" id="WP_012155044.1">
    <property type="nucleotide sequence ID" value="NC_009901.1"/>
</dbReference>
<dbReference type="SMR" id="A8H3I7"/>
<dbReference type="STRING" id="398579.Spea_1801"/>
<dbReference type="KEGG" id="spl:Spea_1801"/>
<dbReference type="eggNOG" id="COG0502">
    <property type="taxonomic scope" value="Bacteria"/>
</dbReference>
<dbReference type="HOGENOM" id="CLU_033172_1_2_6"/>
<dbReference type="OrthoDB" id="9786826at2"/>
<dbReference type="UniPathway" id="UPA00078">
    <property type="reaction ID" value="UER00162"/>
</dbReference>
<dbReference type="Proteomes" id="UP000002608">
    <property type="component" value="Chromosome"/>
</dbReference>
<dbReference type="GO" id="GO:0051537">
    <property type="term" value="F:2 iron, 2 sulfur cluster binding"/>
    <property type="evidence" value="ECO:0007669"/>
    <property type="project" value="UniProtKB-KW"/>
</dbReference>
<dbReference type="GO" id="GO:0051539">
    <property type="term" value="F:4 iron, 4 sulfur cluster binding"/>
    <property type="evidence" value="ECO:0007669"/>
    <property type="project" value="UniProtKB-KW"/>
</dbReference>
<dbReference type="GO" id="GO:0004076">
    <property type="term" value="F:biotin synthase activity"/>
    <property type="evidence" value="ECO:0007669"/>
    <property type="project" value="UniProtKB-UniRule"/>
</dbReference>
<dbReference type="GO" id="GO:0005506">
    <property type="term" value="F:iron ion binding"/>
    <property type="evidence" value="ECO:0007669"/>
    <property type="project" value="UniProtKB-UniRule"/>
</dbReference>
<dbReference type="GO" id="GO:0009102">
    <property type="term" value="P:biotin biosynthetic process"/>
    <property type="evidence" value="ECO:0007669"/>
    <property type="project" value="UniProtKB-UniRule"/>
</dbReference>
<dbReference type="CDD" id="cd01335">
    <property type="entry name" value="Radical_SAM"/>
    <property type="match status" value="1"/>
</dbReference>
<dbReference type="FunFam" id="3.20.20.70:FF:000011">
    <property type="entry name" value="Biotin synthase"/>
    <property type="match status" value="1"/>
</dbReference>
<dbReference type="Gene3D" id="3.20.20.70">
    <property type="entry name" value="Aldolase class I"/>
    <property type="match status" value="1"/>
</dbReference>
<dbReference type="HAMAP" id="MF_01694">
    <property type="entry name" value="BioB"/>
    <property type="match status" value="1"/>
</dbReference>
<dbReference type="InterPro" id="IPR013785">
    <property type="entry name" value="Aldolase_TIM"/>
</dbReference>
<dbReference type="InterPro" id="IPR010722">
    <property type="entry name" value="BATS_dom"/>
</dbReference>
<dbReference type="InterPro" id="IPR002684">
    <property type="entry name" value="Biotin_synth/BioAB"/>
</dbReference>
<dbReference type="InterPro" id="IPR024177">
    <property type="entry name" value="Biotin_synthase"/>
</dbReference>
<dbReference type="InterPro" id="IPR006638">
    <property type="entry name" value="Elp3/MiaA/NifB-like_rSAM"/>
</dbReference>
<dbReference type="InterPro" id="IPR007197">
    <property type="entry name" value="rSAM"/>
</dbReference>
<dbReference type="NCBIfam" id="TIGR00433">
    <property type="entry name" value="bioB"/>
    <property type="match status" value="1"/>
</dbReference>
<dbReference type="PANTHER" id="PTHR22976">
    <property type="entry name" value="BIOTIN SYNTHASE"/>
    <property type="match status" value="1"/>
</dbReference>
<dbReference type="PANTHER" id="PTHR22976:SF2">
    <property type="entry name" value="BIOTIN SYNTHASE, MITOCHONDRIAL"/>
    <property type="match status" value="1"/>
</dbReference>
<dbReference type="Pfam" id="PF06968">
    <property type="entry name" value="BATS"/>
    <property type="match status" value="1"/>
</dbReference>
<dbReference type="Pfam" id="PF04055">
    <property type="entry name" value="Radical_SAM"/>
    <property type="match status" value="1"/>
</dbReference>
<dbReference type="PIRSF" id="PIRSF001619">
    <property type="entry name" value="Biotin_synth"/>
    <property type="match status" value="1"/>
</dbReference>
<dbReference type="SFLD" id="SFLDG01060">
    <property type="entry name" value="BATS_domain_containing"/>
    <property type="match status" value="1"/>
</dbReference>
<dbReference type="SFLD" id="SFLDF00272">
    <property type="entry name" value="biotin_synthase"/>
    <property type="match status" value="1"/>
</dbReference>
<dbReference type="SMART" id="SM00876">
    <property type="entry name" value="BATS"/>
    <property type="match status" value="1"/>
</dbReference>
<dbReference type="SMART" id="SM00729">
    <property type="entry name" value="Elp3"/>
    <property type="match status" value="1"/>
</dbReference>
<dbReference type="SUPFAM" id="SSF102114">
    <property type="entry name" value="Radical SAM enzymes"/>
    <property type="match status" value="1"/>
</dbReference>
<dbReference type="PROSITE" id="PS51918">
    <property type="entry name" value="RADICAL_SAM"/>
    <property type="match status" value="1"/>
</dbReference>
<accession>A8H3I7</accession>
<gene>
    <name evidence="1" type="primary">bioB</name>
    <name type="ordered locus">Spea_1801</name>
</gene>
<name>BIOB_SHEPA</name>
<comment type="function">
    <text evidence="1">Catalyzes the conversion of dethiobiotin (DTB) to biotin by the insertion of a sulfur atom into dethiobiotin via a radical-based mechanism.</text>
</comment>
<comment type="catalytic activity">
    <reaction evidence="1">
        <text>(4R,5S)-dethiobiotin + (sulfur carrier)-SH + 2 reduced [2Fe-2S]-[ferredoxin] + 2 S-adenosyl-L-methionine = (sulfur carrier)-H + biotin + 2 5'-deoxyadenosine + 2 L-methionine + 2 oxidized [2Fe-2S]-[ferredoxin]</text>
        <dbReference type="Rhea" id="RHEA:22060"/>
        <dbReference type="Rhea" id="RHEA-COMP:10000"/>
        <dbReference type="Rhea" id="RHEA-COMP:10001"/>
        <dbReference type="Rhea" id="RHEA-COMP:14737"/>
        <dbReference type="Rhea" id="RHEA-COMP:14739"/>
        <dbReference type="ChEBI" id="CHEBI:17319"/>
        <dbReference type="ChEBI" id="CHEBI:29917"/>
        <dbReference type="ChEBI" id="CHEBI:33737"/>
        <dbReference type="ChEBI" id="CHEBI:33738"/>
        <dbReference type="ChEBI" id="CHEBI:57586"/>
        <dbReference type="ChEBI" id="CHEBI:57844"/>
        <dbReference type="ChEBI" id="CHEBI:59789"/>
        <dbReference type="ChEBI" id="CHEBI:64428"/>
        <dbReference type="ChEBI" id="CHEBI:149473"/>
        <dbReference type="EC" id="2.8.1.6"/>
    </reaction>
</comment>
<comment type="cofactor">
    <cofactor evidence="1">
        <name>[4Fe-4S] cluster</name>
        <dbReference type="ChEBI" id="CHEBI:49883"/>
    </cofactor>
    <text evidence="1">Binds 1 [4Fe-4S] cluster. The cluster is coordinated with 3 cysteines and an exchangeable S-adenosyl-L-methionine.</text>
</comment>
<comment type="cofactor">
    <cofactor evidence="1">
        <name>[2Fe-2S] cluster</name>
        <dbReference type="ChEBI" id="CHEBI:190135"/>
    </cofactor>
    <text evidence="1">Binds 1 [2Fe-2S] cluster. The cluster is coordinated with 3 cysteines and 1 arginine.</text>
</comment>
<comment type="pathway">
    <text evidence="1">Cofactor biosynthesis; biotin biosynthesis; biotin from 7,8-diaminononanoate: step 2/2.</text>
</comment>
<comment type="subunit">
    <text evidence="1">Homodimer.</text>
</comment>
<comment type="similarity">
    <text evidence="1">Belongs to the radical SAM superfamily. Biotin synthase family.</text>
</comment>
<sequence>MPEVQLRNNWKREEIEALFALPMNDLLFQAHSIHRQEFDPNEVQVSRLLSIKTGACPEDCKYCPQSARYDTGLEKERLLAMETVLTEARSAKAAGASRFCMGAAWRNPKERDMPYLKTMVEEVKALGMETCMTLGMLSAEQANTLADAGLDYYNHNLDTSPEYYGDVITTRTYQSRLDTLTNVRASGMKVCSGGIVGMGEKATDRAGLIQQLANLEQHPDSVPINMLVKVEGTPFEKLDDLDPLEFVRTIAVARITMPKSRVRLSAGRENMSDELQAMCFFAGANSIFYGCKLLTTPNPEENDDMSLFKRLGLHPEQGIAATKEQDEAMLAKAAAHQDKKSAAFYDAGAL</sequence>
<reference key="1">
    <citation type="submission" date="2007-10" db="EMBL/GenBank/DDBJ databases">
        <title>Complete sequence of Shewanella pealeana ATCC 700345.</title>
        <authorList>
            <consortium name="US DOE Joint Genome Institute"/>
            <person name="Copeland A."/>
            <person name="Lucas S."/>
            <person name="Lapidus A."/>
            <person name="Barry K."/>
            <person name="Glavina del Rio T."/>
            <person name="Dalin E."/>
            <person name="Tice H."/>
            <person name="Pitluck S."/>
            <person name="Chertkov O."/>
            <person name="Brettin T."/>
            <person name="Bruce D."/>
            <person name="Detter J.C."/>
            <person name="Han C."/>
            <person name="Schmutz J."/>
            <person name="Larimer F."/>
            <person name="Land M."/>
            <person name="Hauser L."/>
            <person name="Kyrpides N."/>
            <person name="Kim E."/>
            <person name="Zhao J.-S.Z."/>
            <person name="Manno D."/>
            <person name="Hawari J."/>
            <person name="Richardson P."/>
        </authorList>
    </citation>
    <scope>NUCLEOTIDE SEQUENCE [LARGE SCALE GENOMIC DNA]</scope>
    <source>
        <strain>ATCC 700345 / ANG-SQ1</strain>
    </source>
</reference>